<protein>
    <recommendedName>
        <fullName>Small, acid-soluble spore protein 2</fullName>
        <shortName>SASP-2</shortName>
    </recommendedName>
</protein>
<comment type="function">
    <text evidence="2">SASP are bound to spore DNA. They are double-stranded DNA-binding proteins that cause DNA to change to an a-like conformation. They protect the DNA backbone from chemical and enzymatic cleavage and are thus involved in dormant spore's high resistance to UV light (By similarity).</text>
</comment>
<comment type="mass spectrometry"/>
<comment type="mass spectrometry"/>
<comment type="miscellaneous">
    <text evidence="2">SASP are degraded in the first minutes of spore germination and provide amino acids for both new protein synthesis and metabolism.</text>
</comment>
<comment type="similarity">
    <text evidence="3">Belongs to the alpha/beta-type SASP family.</text>
</comment>
<sequence>MAQNSQNGNSSNQLLVPGAAQAIDQMKFEIASEFGVNLGAETTSRANGSVGGEITKRLVSFAQQNMSGQQF</sequence>
<organism>
    <name type="scientific">Bacillus subtilis</name>
    <dbReference type="NCBI Taxonomy" id="1423"/>
    <lineage>
        <taxon>Bacteria</taxon>
        <taxon>Bacillati</taxon>
        <taxon>Bacillota</taxon>
        <taxon>Bacilli</taxon>
        <taxon>Bacillales</taxon>
        <taxon>Bacillaceae</taxon>
        <taxon>Bacillus</taxon>
    </lineage>
</organism>
<dbReference type="SMR" id="P84584"/>
<dbReference type="STRING" id="483913.AN935_14810"/>
<dbReference type="GO" id="GO:0003690">
    <property type="term" value="F:double-stranded DNA binding"/>
    <property type="evidence" value="ECO:0007669"/>
    <property type="project" value="InterPro"/>
</dbReference>
<dbReference type="GO" id="GO:0006265">
    <property type="term" value="P:DNA topological change"/>
    <property type="evidence" value="ECO:0007669"/>
    <property type="project" value="InterPro"/>
</dbReference>
<dbReference type="GO" id="GO:0030435">
    <property type="term" value="P:sporulation resulting in formation of a cellular spore"/>
    <property type="evidence" value="ECO:0007669"/>
    <property type="project" value="UniProtKB-KW"/>
</dbReference>
<dbReference type="Gene3D" id="6.10.10.80">
    <property type="entry name" value="Small, acid-soluble spore protein, alpha/beta type-like"/>
    <property type="match status" value="1"/>
</dbReference>
<dbReference type="InterPro" id="IPR001448">
    <property type="entry name" value="SASP_alpha/beta-type"/>
</dbReference>
<dbReference type="InterPro" id="IPR018126">
    <property type="entry name" value="SASP_alpha/beta-type_CS"/>
</dbReference>
<dbReference type="InterPro" id="IPR050847">
    <property type="entry name" value="SASP_DNA-binding"/>
</dbReference>
<dbReference type="InterPro" id="IPR038300">
    <property type="entry name" value="SASP_sf_alpha/beta"/>
</dbReference>
<dbReference type="PANTHER" id="PTHR36107">
    <property type="entry name" value="SMALL, ACID-SOLUBLE SPORE PROTEIN A"/>
    <property type="match status" value="1"/>
</dbReference>
<dbReference type="PANTHER" id="PTHR36107:SF1">
    <property type="entry name" value="SMALL, ACID-SOLUBLE SPORE PROTEIN A"/>
    <property type="match status" value="1"/>
</dbReference>
<dbReference type="Pfam" id="PF00269">
    <property type="entry name" value="SASP"/>
    <property type="match status" value="1"/>
</dbReference>
<dbReference type="PROSITE" id="PS00304">
    <property type="entry name" value="SASP_1"/>
    <property type="match status" value="1"/>
</dbReference>
<dbReference type="PROSITE" id="PS00684">
    <property type="entry name" value="SASP_2"/>
    <property type="match status" value="1"/>
</dbReference>
<accession>P84584</accession>
<evidence type="ECO:0000250" key="1"/>
<evidence type="ECO:0000250" key="2">
    <source>
        <dbReference type="UniProtKB" id="P06552"/>
    </source>
</evidence>
<evidence type="ECO:0000255" key="3"/>
<evidence type="ECO:0000269" key="4">
    <source>
    </source>
</evidence>
<evidence type="ECO:0000305" key="5"/>
<name>SAS2_BACIU</name>
<proteinExistence type="evidence at protein level"/>
<keyword id="KW-0903">Direct protein sequencing</keyword>
<keyword id="KW-0238">DNA-binding</keyword>
<keyword id="KW-0749">Sporulation</keyword>
<feature type="initiator methionine" description="Removed" evidence="4">
    <location>
        <position position="1"/>
    </location>
</feature>
<feature type="chain" id="PRO_0000196304" description="Small, acid-soluble spore protein 2">
    <location>
        <begin position="2"/>
        <end position="71"/>
    </location>
</feature>
<feature type="site" description="Cleavage; by spore protease" evidence="1">
    <location>
        <begin position="29"/>
        <end position="30"/>
    </location>
</feature>
<reference evidence="5" key="1">
    <citation type="journal article" date="2004" name="J. Mass Spectrom.">
        <title>Complete sequences of small acid-soluble proteins from Bacillus globigii.</title>
        <authorList>
            <person name="Whiteaker J.R."/>
            <person name="Warscheid B."/>
            <person name="Pribil P."/>
            <person name="Hathout Y."/>
            <person name="Fenselau C."/>
        </authorList>
    </citation>
    <scope>PROTEIN SEQUENCE OF 2-71</scope>
    <scope>MASS SPECTROMETRY</scope>
    <source>
        <strain evidence="4">Globigii</strain>
    </source>
</reference>